<sequence length="104" mass="12235">MIRKAFVMQVNPDAHEEYQRRHNPIWPELEAVLKSHGAHNYAIYLDKARNLLFATIEIESEERWNAVASTDVCQRWWKYMIDVMPANADNSPVSSELQEVFYLP</sequence>
<feature type="chain" id="PRO_1000187213" description="L-rhamnose mutarotase">
    <location>
        <begin position="1"/>
        <end position="104"/>
    </location>
</feature>
<feature type="active site" description="Proton donor" evidence="1">
    <location>
        <position position="22"/>
    </location>
</feature>
<feature type="binding site" evidence="1">
    <location>
        <position position="18"/>
    </location>
    <ligand>
        <name>substrate</name>
    </ligand>
</feature>
<feature type="binding site" evidence="1">
    <location>
        <position position="41"/>
    </location>
    <ligand>
        <name>substrate</name>
    </ligand>
</feature>
<feature type="binding site" evidence="1">
    <location>
        <begin position="76"/>
        <end position="77"/>
    </location>
    <ligand>
        <name>substrate</name>
    </ligand>
</feature>
<gene>
    <name evidence="1" type="primary">rhaM</name>
    <name type="ordered locus">E2348C_4206</name>
</gene>
<comment type="function">
    <text evidence="1">Involved in the anomeric conversion of L-rhamnose.</text>
</comment>
<comment type="catalytic activity">
    <reaction evidence="1">
        <text>alpha-L-rhamnose = beta-L-rhamnose</text>
        <dbReference type="Rhea" id="RHEA:25584"/>
        <dbReference type="ChEBI" id="CHEBI:27586"/>
        <dbReference type="ChEBI" id="CHEBI:27907"/>
        <dbReference type="EC" id="5.1.3.32"/>
    </reaction>
</comment>
<comment type="pathway">
    <text evidence="1">Carbohydrate metabolism; L-rhamnose metabolism.</text>
</comment>
<comment type="subunit">
    <text evidence="1">Homodimer.</text>
</comment>
<comment type="subcellular location">
    <subcellularLocation>
        <location evidence="1">Cytoplasm</location>
    </subcellularLocation>
</comment>
<comment type="similarity">
    <text evidence="1">Belongs to the rhamnose mutarotase family.</text>
</comment>
<keyword id="KW-0119">Carbohydrate metabolism</keyword>
<keyword id="KW-0963">Cytoplasm</keyword>
<keyword id="KW-0413">Isomerase</keyword>
<keyword id="KW-1185">Reference proteome</keyword>
<keyword id="KW-0684">Rhamnose metabolism</keyword>
<name>RHAM_ECO27</name>
<accession>B7UNM2</accession>
<dbReference type="EC" id="5.1.3.32" evidence="1"/>
<dbReference type="EMBL" id="FM180568">
    <property type="protein sequence ID" value="CAS11754.1"/>
    <property type="molecule type" value="Genomic_DNA"/>
</dbReference>
<dbReference type="RefSeq" id="WP_000619497.1">
    <property type="nucleotide sequence ID" value="NC_011601.1"/>
</dbReference>
<dbReference type="SMR" id="B7UNM2"/>
<dbReference type="KEGG" id="ecg:E2348C_4206"/>
<dbReference type="HOGENOM" id="CLU_100689_2_0_6"/>
<dbReference type="UniPathway" id="UPA00125"/>
<dbReference type="Proteomes" id="UP000008205">
    <property type="component" value="Chromosome"/>
</dbReference>
<dbReference type="GO" id="GO:0005737">
    <property type="term" value="C:cytoplasm"/>
    <property type="evidence" value="ECO:0007669"/>
    <property type="project" value="UniProtKB-SubCell"/>
</dbReference>
<dbReference type="GO" id="GO:0062192">
    <property type="term" value="F:L-rhamnose mutarotase activity"/>
    <property type="evidence" value="ECO:0007669"/>
    <property type="project" value="UniProtKB-EC"/>
</dbReference>
<dbReference type="GO" id="GO:0019301">
    <property type="term" value="P:rhamnose catabolic process"/>
    <property type="evidence" value="ECO:0007669"/>
    <property type="project" value="TreeGrafter"/>
</dbReference>
<dbReference type="FunFam" id="3.30.70.100:FF:000013">
    <property type="entry name" value="L-rhamnose mutarotase"/>
    <property type="match status" value="1"/>
</dbReference>
<dbReference type="Gene3D" id="3.30.70.100">
    <property type="match status" value="1"/>
</dbReference>
<dbReference type="HAMAP" id="MF_01663">
    <property type="entry name" value="L_rham_rotase"/>
    <property type="match status" value="1"/>
</dbReference>
<dbReference type="InterPro" id="IPR011008">
    <property type="entry name" value="Dimeric_a/b-barrel"/>
</dbReference>
<dbReference type="InterPro" id="IPR013448">
    <property type="entry name" value="L-rhamnose_mutarotase"/>
</dbReference>
<dbReference type="InterPro" id="IPR008000">
    <property type="entry name" value="Rham/fucose_mutarotase"/>
</dbReference>
<dbReference type="NCBIfam" id="TIGR02625">
    <property type="entry name" value="YiiL_rotase"/>
    <property type="match status" value="1"/>
</dbReference>
<dbReference type="PANTHER" id="PTHR34389">
    <property type="entry name" value="L-RHAMNOSE MUTAROTASE"/>
    <property type="match status" value="1"/>
</dbReference>
<dbReference type="PANTHER" id="PTHR34389:SF2">
    <property type="entry name" value="L-RHAMNOSE MUTAROTASE"/>
    <property type="match status" value="1"/>
</dbReference>
<dbReference type="Pfam" id="PF05336">
    <property type="entry name" value="rhaM"/>
    <property type="match status" value="1"/>
</dbReference>
<dbReference type="SUPFAM" id="SSF54909">
    <property type="entry name" value="Dimeric alpha+beta barrel"/>
    <property type="match status" value="1"/>
</dbReference>
<protein>
    <recommendedName>
        <fullName evidence="1">L-rhamnose mutarotase</fullName>
        <ecNumber evidence="1">5.1.3.32</ecNumber>
    </recommendedName>
    <alternativeName>
        <fullName evidence="1">Rhamnose 1-epimerase</fullName>
    </alternativeName>
    <alternativeName>
        <fullName evidence="1">Type-3 mutarotase</fullName>
    </alternativeName>
</protein>
<organism>
    <name type="scientific">Escherichia coli O127:H6 (strain E2348/69 / EPEC)</name>
    <dbReference type="NCBI Taxonomy" id="574521"/>
    <lineage>
        <taxon>Bacteria</taxon>
        <taxon>Pseudomonadati</taxon>
        <taxon>Pseudomonadota</taxon>
        <taxon>Gammaproteobacteria</taxon>
        <taxon>Enterobacterales</taxon>
        <taxon>Enterobacteriaceae</taxon>
        <taxon>Escherichia</taxon>
    </lineage>
</organism>
<proteinExistence type="inferred from homology"/>
<reference key="1">
    <citation type="journal article" date="2009" name="J. Bacteriol.">
        <title>Complete genome sequence and comparative genome analysis of enteropathogenic Escherichia coli O127:H6 strain E2348/69.</title>
        <authorList>
            <person name="Iguchi A."/>
            <person name="Thomson N.R."/>
            <person name="Ogura Y."/>
            <person name="Saunders D."/>
            <person name="Ooka T."/>
            <person name="Henderson I.R."/>
            <person name="Harris D."/>
            <person name="Asadulghani M."/>
            <person name="Kurokawa K."/>
            <person name="Dean P."/>
            <person name="Kenny B."/>
            <person name="Quail M.A."/>
            <person name="Thurston S."/>
            <person name="Dougan G."/>
            <person name="Hayashi T."/>
            <person name="Parkhill J."/>
            <person name="Frankel G."/>
        </authorList>
    </citation>
    <scope>NUCLEOTIDE SEQUENCE [LARGE SCALE GENOMIC DNA]</scope>
    <source>
        <strain>E2348/69 / EPEC</strain>
    </source>
</reference>
<evidence type="ECO:0000255" key="1">
    <source>
        <dbReference type="HAMAP-Rule" id="MF_01663"/>
    </source>
</evidence>